<name>Y766_AQUAE</name>
<organism>
    <name type="scientific">Aquifex aeolicus (strain VF5)</name>
    <dbReference type="NCBI Taxonomy" id="224324"/>
    <lineage>
        <taxon>Bacteria</taxon>
        <taxon>Pseudomonadati</taxon>
        <taxon>Aquificota</taxon>
        <taxon>Aquificia</taxon>
        <taxon>Aquificales</taxon>
        <taxon>Aquificaceae</taxon>
        <taxon>Aquifex</taxon>
    </lineage>
</organism>
<protein>
    <recommendedName>
        <fullName>Uncharacterized protein aq_766</fullName>
    </recommendedName>
</protein>
<keyword id="KW-0472">Membrane</keyword>
<keyword id="KW-1185">Reference proteome</keyword>
<keyword id="KW-0812">Transmembrane</keyword>
<keyword id="KW-1133">Transmembrane helix</keyword>
<dbReference type="EMBL" id="AE000657">
    <property type="protein sequence ID" value="AAC06927.1"/>
    <property type="molecule type" value="Genomic_DNA"/>
</dbReference>
<dbReference type="PIR" id="C70367">
    <property type="entry name" value="C70367"/>
</dbReference>
<dbReference type="RefSeq" id="NP_213527.1">
    <property type="nucleotide sequence ID" value="NC_000918.1"/>
</dbReference>
<dbReference type="RefSeq" id="WP_010880465.1">
    <property type="nucleotide sequence ID" value="NC_000918.1"/>
</dbReference>
<dbReference type="STRING" id="224324.aq_766"/>
<dbReference type="EnsemblBacteria" id="AAC06927">
    <property type="protein sequence ID" value="AAC06927"/>
    <property type="gene ID" value="aq_766"/>
</dbReference>
<dbReference type="KEGG" id="aae:aq_766"/>
<dbReference type="HOGENOM" id="CLU_978774_0_0_0"/>
<dbReference type="InParanoid" id="O66966"/>
<dbReference type="OrthoDB" id="13903at2"/>
<dbReference type="Proteomes" id="UP000000798">
    <property type="component" value="Chromosome"/>
</dbReference>
<dbReference type="GO" id="GO:0016020">
    <property type="term" value="C:membrane"/>
    <property type="evidence" value="ECO:0007669"/>
    <property type="project" value="UniProtKB-SubCell"/>
</dbReference>
<feature type="chain" id="PRO_0000186880" description="Uncharacterized protein aq_766">
    <location>
        <begin position="1"/>
        <end position="284"/>
    </location>
</feature>
<feature type="transmembrane region" description="Helical" evidence="1">
    <location>
        <begin position="9"/>
        <end position="28"/>
    </location>
</feature>
<reference key="1">
    <citation type="journal article" date="1998" name="Nature">
        <title>The complete genome of the hyperthermophilic bacterium Aquifex aeolicus.</title>
        <authorList>
            <person name="Deckert G."/>
            <person name="Warren P.V."/>
            <person name="Gaasterland T."/>
            <person name="Young W.G."/>
            <person name="Lenox A.L."/>
            <person name="Graham D.E."/>
            <person name="Overbeek R."/>
            <person name="Snead M.A."/>
            <person name="Keller M."/>
            <person name="Aujay M."/>
            <person name="Huber R."/>
            <person name="Feldman R.A."/>
            <person name="Short J.M."/>
            <person name="Olsen G.J."/>
            <person name="Swanson R.V."/>
        </authorList>
    </citation>
    <scope>NUCLEOTIDE SEQUENCE [LARGE SCALE GENOMIC DNA]</scope>
    <source>
        <strain>VF5</strain>
    </source>
</reference>
<accession>O66966</accession>
<comment type="subcellular location">
    <subcellularLocation>
        <location evidence="2">Membrane</location>
        <topology evidence="2">Single-pass membrane protein</topology>
    </subcellularLocation>
</comment>
<gene>
    <name type="ordered locus">aq_766</name>
</gene>
<evidence type="ECO:0000255" key="1"/>
<evidence type="ECO:0000305" key="2"/>
<proteinExistence type="predicted"/>
<sequence length="284" mass="33853">MKIPRGIKIILRWVVTLYIYGFILYQITPFSYFETYIPEERLAPKPYVERIFYLFGVKSNEYPSKEVLEFLKSMDVDLVYGFFPFEDYGIFKNSLKAPECHLIYTSEISTFHRILNFLFDYVPKKITGNETRTFHYFIKPKLGKCNVIVQDVYLSPNFLDFKLDHSRNMVYKRLWEDLQLEQNVITNGRKSVDVYAYSTKSMYYPSESTIYPFKLYAKSNEEKTLIIVYRDGKVYRIYDERSTVLKINKPGKYSVKILTYAFSWEGYYFGLRTIAYSAPITLLY</sequence>